<comment type="interaction">
    <interactant intactId="EBI-743382">
        <id>Q8N7W2</id>
    </interactant>
    <interactant intactId="EBI-740897">
        <id>Q9GZT8</id>
        <label>NIF3L1</label>
    </interactant>
    <organismsDiffer>false</organismsDiffer>
    <experiments>3</experiments>
</comment>
<comment type="interaction">
    <interactant intactId="EBI-10181188">
        <id>Q8N7W2-2</id>
    </interactant>
    <interactant intactId="EBI-762428">
        <id>Q92688</id>
        <label>ANP32B</label>
    </interactant>
    <organismsDiffer>false</organismsDiffer>
    <experiments>3</experiments>
</comment>
<comment type="interaction">
    <interactant intactId="EBI-10181188">
        <id>Q8N7W2-2</id>
    </interactant>
    <interactant intactId="EBI-11977289">
        <id>Q9H503-2</id>
        <label>BANF2</label>
    </interactant>
    <organismsDiffer>false</organismsDiffer>
    <experiments>3</experiments>
</comment>
<comment type="interaction">
    <interactant intactId="EBI-10181188">
        <id>Q8N7W2-2</id>
    </interactant>
    <interactant intactId="EBI-358049">
        <id>Q13895</id>
        <label>BYSL</label>
    </interactant>
    <organismsDiffer>false</organismsDiffer>
    <experiments>8</experiments>
</comment>
<comment type="interaction">
    <interactant intactId="EBI-10181188">
        <id>Q8N7W2-2</id>
    </interactant>
    <interactant intactId="EBI-725606">
        <id>Q9NWQ9</id>
        <label>C14orf119</label>
    </interactant>
    <organismsDiffer>false</organismsDiffer>
    <experiments>3</experiments>
</comment>
<comment type="interaction">
    <interactant intactId="EBI-10181188">
        <id>Q8N7W2-2</id>
    </interactant>
    <interactant intactId="EBI-295634">
        <id>Q16543</id>
        <label>CDC37</label>
    </interactant>
    <organismsDiffer>false</organismsDiffer>
    <experiments>3</experiments>
</comment>
<comment type="interaction">
    <interactant intactId="EBI-10181188">
        <id>Q8N7W2-2</id>
    </interactant>
    <interactant intactId="EBI-5278764">
        <id>Q96GN5</id>
        <label>CDCA7L</label>
    </interactant>
    <organismsDiffer>false</organismsDiffer>
    <experiments>3</experiments>
</comment>
<comment type="interaction">
    <interactant intactId="EBI-10181188">
        <id>Q8N7W2-2</id>
    </interactant>
    <interactant intactId="EBI-744115">
        <id>Q9C0F1</id>
        <label>CEP44</label>
    </interactant>
    <organismsDiffer>false</organismsDiffer>
    <experiments>3</experiments>
</comment>
<comment type="interaction">
    <interactant intactId="EBI-10181188">
        <id>Q8N7W2-2</id>
    </interactant>
    <interactant intactId="EBI-1210503">
        <id>O14647</id>
        <label>CHD2</label>
    </interactant>
    <organismsDiffer>false</organismsDiffer>
    <experiments>3</experiments>
</comment>
<comment type="interaction">
    <interactant intactId="EBI-10181188">
        <id>Q8N7W2-2</id>
    </interactant>
    <interactant intactId="EBI-10292696">
        <id>Q96Q77</id>
        <label>CIB3</label>
    </interactant>
    <organismsDiffer>false</organismsDiffer>
    <experiments>3</experiments>
</comment>
<comment type="interaction">
    <interactant intactId="EBI-10181188">
        <id>Q8N7W2-2</id>
    </interactant>
    <interactant intactId="EBI-347804">
        <id>P68400</id>
        <label>CSNK2A1</label>
    </interactant>
    <organismsDiffer>false</organismsDiffer>
    <experiments>3</experiments>
</comment>
<comment type="interaction">
    <interactant intactId="EBI-10181188">
        <id>Q8N7W2-2</id>
    </interactant>
    <interactant intactId="EBI-351257">
        <id>P26196</id>
        <label>DDX6</label>
    </interactant>
    <organismsDiffer>false</organismsDiffer>
    <experiments>3</experiments>
</comment>
<comment type="interaction">
    <interactant intactId="EBI-10181188">
        <id>Q8N7W2-2</id>
    </interactant>
    <interactant intactId="EBI-739789">
        <id>Q92997</id>
        <label>DVL3</label>
    </interactant>
    <organismsDiffer>false</organismsDiffer>
    <experiments>5</experiments>
</comment>
<comment type="interaction">
    <interactant intactId="EBI-10181188">
        <id>Q8N7W2-2</id>
    </interactant>
    <interactant intactId="EBI-769261">
        <id>Q96JC9</id>
        <label>EAF1</label>
    </interactant>
    <organismsDiffer>false</organismsDiffer>
    <experiments>3</experiments>
</comment>
<comment type="interaction">
    <interactant intactId="EBI-10181188">
        <id>Q8N7W2-2</id>
    </interactant>
    <interactant intactId="EBI-1245604">
        <id>Q96CJ1</id>
        <label>EAF2</label>
    </interactant>
    <organismsDiffer>false</organismsDiffer>
    <experiments>5</experiments>
</comment>
<comment type="interaction">
    <interactant intactId="EBI-10181188">
        <id>Q8N7W2-2</id>
    </interactant>
    <interactant intactId="EBI-750700">
        <id>Q8N9N8</id>
        <label>EIF1AD</label>
    </interactant>
    <organismsDiffer>false</organismsDiffer>
    <experiments>6</experiments>
</comment>
<comment type="interaction">
    <interactant intactId="EBI-10181188">
        <id>Q8N7W2-2</id>
    </interactant>
    <interactant intactId="EBI-489887">
        <id>P50402</id>
        <label>EMD</label>
    </interactant>
    <organismsDiffer>false</organismsDiffer>
    <experiments>9</experiments>
</comment>
<comment type="interaction">
    <interactant intactId="EBI-10181188">
        <id>Q8N7W2-2</id>
    </interactant>
    <interactant intactId="EBI-10268158">
        <id>Q8N9E0</id>
        <label>FAM133A</label>
    </interactant>
    <organismsDiffer>false</organismsDiffer>
    <experiments>3</experiments>
</comment>
<comment type="interaction">
    <interactant intactId="EBI-10181188">
        <id>Q8N7W2-2</id>
    </interactant>
    <interactant intactId="EBI-448202">
        <id>O95257</id>
        <label>GADD45G</label>
    </interactant>
    <organismsDiffer>false</organismsDiffer>
    <experiments>3</experiments>
</comment>
<comment type="interaction">
    <interactant intactId="EBI-10181188">
        <id>Q8N7W2-2</id>
    </interactant>
    <interactant intactId="EBI-443648">
        <id>O14893</id>
        <label>GEMIN2</label>
    </interactant>
    <organismsDiffer>false</organismsDiffer>
    <experiments>3</experiments>
</comment>
<comment type="interaction">
    <interactant intactId="EBI-10181188">
        <id>Q8N7W2-2</id>
    </interactant>
    <interactant intactId="EBI-740290">
        <id>Q969Y2</id>
        <label>GTPBP3</label>
    </interactant>
    <organismsDiffer>false</organismsDiffer>
    <experiments>3</experiments>
</comment>
<comment type="interaction">
    <interactant intactId="EBI-10181188">
        <id>Q8N7W2-2</id>
    </interactant>
    <interactant intactId="EBI-740553">
        <id>P13807</id>
        <label>GYS1</label>
    </interactant>
    <organismsDiffer>false</organismsDiffer>
    <experiments>3</experiments>
</comment>
<comment type="interaction">
    <interactant intactId="EBI-10181188">
        <id>Q8N7W2-2</id>
    </interactant>
    <interactant intactId="EBI-2549423">
        <id>Q6NT76</id>
        <label>HMBOX1</label>
    </interactant>
    <organismsDiffer>false</organismsDiffer>
    <experiments>3</experiments>
</comment>
<comment type="interaction">
    <interactant intactId="EBI-10181188">
        <id>Q8N7W2-2</id>
    </interactant>
    <interactant intactId="EBI-7116203">
        <id>O75031</id>
        <label>HSF2BP</label>
    </interactant>
    <organismsDiffer>false</organismsDiffer>
    <experiments>5</experiments>
</comment>
<comment type="interaction">
    <interactant intactId="EBI-10181188">
        <id>Q8N7W2-2</id>
    </interactant>
    <interactant intactId="EBI-2556193">
        <id>Q63ZY3</id>
        <label>KANK2</label>
    </interactant>
    <organismsDiffer>false</organismsDiffer>
    <experiments>3</experiments>
</comment>
<comment type="interaction">
    <interactant intactId="EBI-10181188">
        <id>Q8N7W2-2</id>
    </interactant>
    <interactant intactId="EBI-739909">
        <id>Q969R5</id>
        <label>L3MBTL2</label>
    </interactant>
    <organismsDiffer>false</organismsDiffer>
    <experiments>8</experiments>
</comment>
<comment type="interaction">
    <interactant intactId="EBI-10181188">
        <id>Q8N7W2-2</id>
    </interactant>
    <interactant intactId="EBI-11742507">
        <id>Q8TAP4-4</id>
        <label>LMO3</label>
    </interactant>
    <organismsDiffer>false</organismsDiffer>
    <experiments>7</experiments>
</comment>
<comment type="interaction">
    <interactant intactId="EBI-10181188">
        <id>Q8N7W2-2</id>
    </interactant>
    <interactant intactId="EBI-739832">
        <id>Q8TBB1</id>
        <label>LNX1</label>
    </interactant>
    <organismsDiffer>false</organismsDiffer>
    <experiments>3</experiments>
</comment>
<comment type="interaction">
    <interactant intactId="EBI-10181188">
        <id>Q8N7W2-2</id>
    </interactant>
    <interactant intactId="EBI-713507">
        <id>Q9NX58</id>
        <label>LYAR</label>
    </interactant>
    <organismsDiffer>false</organismsDiffer>
    <experiments>3</experiments>
</comment>
<comment type="interaction">
    <interactant intactId="EBI-10181188">
        <id>Q8N7W2-2</id>
    </interactant>
    <interactant intactId="EBI-746778">
        <id>Q96A72</id>
        <label>MAGOHB</label>
    </interactant>
    <organismsDiffer>false</organismsDiffer>
    <experiments>3</experiments>
</comment>
<comment type="interaction">
    <interactant intactId="EBI-10181188">
        <id>Q8N7W2-2</id>
    </interactant>
    <interactant intactId="EBI-1048159">
        <id>P55081</id>
        <label>MFAP1</label>
    </interactant>
    <organismsDiffer>false</organismsDiffer>
    <experiments>6</experiments>
</comment>
<comment type="interaction">
    <interactant intactId="EBI-10181188">
        <id>Q8N7W2-2</id>
    </interactant>
    <interactant intactId="EBI-8852072">
        <id>Q9UH92-3</id>
        <label>MLX</label>
    </interactant>
    <organismsDiffer>false</organismsDiffer>
    <experiments>3</experiments>
</comment>
<comment type="interaction">
    <interactant intactId="EBI-10181188">
        <id>Q8N7W2-2</id>
    </interactant>
    <interactant intactId="EBI-399246">
        <id>Q9UBU8</id>
        <label>MORF4L1</label>
    </interactant>
    <organismsDiffer>false</organismsDiffer>
    <experiments>3</experiments>
</comment>
<comment type="interaction">
    <interactant intactId="EBI-10181188">
        <id>Q8N7W2-2</id>
    </interactant>
    <interactant intactId="EBI-399257">
        <id>Q15014</id>
        <label>MORF4L2</label>
    </interactant>
    <organismsDiffer>false</organismsDiffer>
    <experiments>3</experiments>
</comment>
<comment type="interaction">
    <interactant intactId="EBI-10181188">
        <id>Q8N7W2-2</id>
    </interactant>
    <interactant intactId="EBI-11750983">
        <id>Q9HC98-4</id>
        <label>NEK6</label>
    </interactant>
    <organismsDiffer>false</organismsDiffer>
    <experiments>3</experiments>
</comment>
<comment type="interaction">
    <interactant intactId="EBI-10181188">
        <id>Q8N7W2-2</id>
    </interactant>
    <interactant intactId="EBI-3920396">
        <id>Q6ZUT1</id>
        <label>NKAPD1</label>
    </interactant>
    <organismsDiffer>false</organismsDiffer>
    <experiments>6</experiments>
</comment>
<comment type="interaction">
    <interactant intactId="EBI-10181188">
        <id>Q8N7W2-2</id>
    </interactant>
    <interactant intactId="EBI-10180231">
        <id>Q6ZUT1-2</id>
        <label>NKAPD1</label>
    </interactant>
    <organismsDiffer>false</organismsDiffer>
    <experiments>3</experiments>
</comment>
<comment type="interaction">
    <interactant intactId="EBI-10181188">
        <id>Q8N7W2-2</id>
    </interactant>
    <interactant intactId="EBI-716098">
        <id>Q9UGY1</id>
        <label>NOL12</label>
    </interactant>
    <organismsDiffer>false</organismsDiffer>
    <experiments>3</experiments>
</comment>
<comment type="interaction">
    <interactant intactId="EBI-10181188">
        <id>Q8N7W2-2</id>
    </interactant>
    <interactant intactId="EBI-591778">
        <id>P61970</id>
        <label>NUTF2</label>
    </interactant>
    <organismsDiffer>false</organismsDiffer>
    <experiments>3</experiments>
</comment>
<comment type="interaction">
    <interactant intactId="EBI-10181188">
        <id>Q8N7W2-2</id>
    </interactant>
    <interactant intactId="EBI-9057006">
        <id>Q9UJX0</id>
        <label>OSGIN1</label>
    </interactant>
    <organismsDiffer>false</organismsDiffer>
    <experiments>3</experiments>
</comment>
<comment type="interaction">
    <interactant intactId="EBI-10181188">
        <id>Q8N7W2-2</id>
    </interactant>
    <interactant intactId="EBI-750589">
        <id>P30039</id>
        <label>PBLD</label>
    </interactant>
    <organismsDiffer>false</organismsDiffer>
    <experiments>3</experiments>
</comment>
<comment type="interaction">
    <interactant intactId="EBI-10181188">
        <id>Q8N7W2-2</id>
    </interactant>
    <interactant intactId="EBI-696621">
        <id>P11309</id>
        <label>PIM1</label>
    </interactant>
    <organismsDiffer>false</organismsDiffer>
    <experiments>3</experiments>
</comment>
<comment type="interaction">
    <interactant intactId="EBI-10181188">
        <id>Q8N7W2-2</id>
    </interactant>
    <interactant intactId="EBI-2855862">
        <id>Q9BT43</id>
        <label>POLR3GL</label>
    </interactant>
    <organismsDiffer>false</organismsDiffer>
    <experiments>3</experiments>
</comment>
<comment type="interaction">
    <interactant intactId="EBI-10181188">
        <id>Q8N7W2-2</id>
    </interactant>
    <interactant intactId="EBI-396072">
        <id>Q13427</id>
        <label>PPIG</label>
    </interactant>
    <organismsDiffer>false</organismsDiffer>
    <experiments>3</experiments>
</comment>
<comment type="interaction">
    <interactant intactId="EBI-10181188">
        <id>Q8N7W2-2</id>
    </interactant>
    <interactant intactId="EBI-5235692">
        <id>O75864</id>
        <label>PPP1R37</label>
    </interactant>
    <organismsDiffer>false</organismsDiffer>
    <experiments>3</experiments>
</comment>
<comment type="interaction">
    <interactant intactId="EBI-10181188">
        <id>Q8N7W2-2</id>
    </interactant>
    <interactant intactId="EBI-2809009">
        <id>O60678</id>
        <label>PRMT3</label>
    </interactant>
    <organismsDiffer>false</organismsDiffer>
    <experiments>3</experiments>
</comment>
<comment type="interaction">
    <interactant intactId="EBI-10181188">
        <id>Q8N7W2-2</id>
    </interactant>
    <interactant intactId="EBI-5280197">
        <id>O75400-2</id>
        <label>PRPF40A</label>
    </interactant>
    <organismsDiffer>false</organismsDiffer>
    <experiments>3</experiments>
</comment>
<comment type="interaction">
    <interactant intactId="EBI-10181188">
        <id>Q8N7W2-2</id>
    </interactant>
    <interactant intactId="EBI-372273">
        <id>P20618</id>
        <label>PSMB1</label>
    </interactant>
    <organismsDiffer>false</organismsDiffer>
    <experiments>3</experiments>
</comment>
<comment type="interaction">
    <interactant intactId="EBI-10181188">
        <id>Q8N7W2-2</id>
    </interactant>
    <interactant intactId="EBI-10249635">
        <id>Q6FGU7</id>
        <label>RAB7L1</label>
    </interactant>
    <organismsDiffer>false</organismsDiffer>
    <experiments>3</experiments>
</comment>
<comment type="interaction">
    <interactant intactId="EBI-10181188">
        <id>Q8N7W2-2</id>
    </interactant>
    <interactant intactId="EBI-721525">
        <id>P98175</id>
        <label>RBM10</label>
    </interactant>
    <organismsDiffer>false</organismsDiffer>
    <experiments>3</experiments>
</comment>
<comment type="interaction">
    <interactant intactId="EBI-10181188">
        <id>Q8N7W2-2</id>
    </interactant>
    <interactant intactId="EBI-10226430">
        <id>Q0D2K3</id>
        <label>RIPPLY1</label>
    </interactant>
    <organismsDiffer>false</organismsDiffer>
    <experiments>3</experiments>
</comment>
<comment type="interaction">
    <interactant intactId="EBI-10181188">
        <id>Q8N7W2-2</id>
    </interactant>
    <interactant intactId="EBI-354533">
        <id>P35268</id>
        <label>RPL22</label>
    </interactant>
    <organismsDiffer>false</organismsDiffer>
    <experiments>5</experiments>
</comment>
<comment type="interaction">
    <interactant intactId="EBI-10181188">
        <id>Q8N7W2-2</id>
    </interactant>
    <interactant intactId="EBI-748391">
        <id>Q9BWG6</id>
        <label>SCNM1</label>
    </interactant>
    <organismsDiffer>false</organismsDiffer>
    <experiments>3</experiments>
</comment>
<comment type="interaction">
    <interactant intactId="EBI-10181188">
        <id>Q8N7W2-2</id>
    </interactant>
    <interactant intactId="EBI-727004">
        <id>O00560</id>
        <label>SDCBP</label>
    </interactant>
    <organismsDiffer>false</organismsDiffer>
    <experiments>3</experiments>
</comment>
<comment type="interaction">
    <interactant intactId="EBI-10181188">
        <id>Q8N7W2-2</id>
    </interactant>
    <interactant intactId="EBI-10212306">
        <id>P51531-2</id>
        <label>SMARCA2</label>
    </interactant>
    <organismsDiffer>false</organismsDiffer>
    <experiments>3</experiments>
</comment>
<comment type="interaction">
    <interactant intactId="EBI-10181188">
        <id>Q8N7W2-2</id>
    </interactant>
    <interactant intactId="EBI-12023934">
        <id>Q5MJ10</id>
        <label>SPANXN2</label>
    </interactant>
    <organismsDiffer>false</organismsDiffer>
    <experiments>3</experiments>
</comment>
<comment type="interaction">
    <interactant intactId="EBI-10181188">
        <id>Q8N7W2-2</id>
    </interactant>
    <interactant intactId="EBI-741515">
        <id>Q9NVV9</id>
        <label>THAP1</label>
    </interactant>
    <organismsDiffer>false</organismsDiffer>
    <experiments>3</experiments>
</comment>
<comment type="interaction">
    <interactant intactId="EBI-10181188">
        <id>Q8N7W2-2</id>
    </interactant>
    <interactant intactId="EBI-740492">
        <id>Q9UKI8</id>
        <label>TLK1</label>
    </interactant>
    <organismsDiffer>false</organismsDiffer>
    <experiments>3</experiments>
</comment>
<comment type="interaction">
    <interactant intactId="EBI-10181188">
        <id>Q8N7W2-2</id>
    </interactant>
    <interactant intactId="EBI-12076664">
        <id>O14787-2</id>
        <label>TNPO2</label>
    </interactant>
    <organismsDiffer>false</organismsDiffer>
    <experiments>3</experiments>
</comment>
<comment type="interaction">
    <interactant intactId="EBI-10181188">
        <id>Q8N7W2-2</id>
    </interactant>
    <interactant intactId="EBI-2341136">
        <id>Q12899</id>
        <label>TRIM26</label>
    </interactant>
    <organismsDiffer>false</organismsDiffer>
    <experiments>3</experiments>
</comment>
<comment type="interaction">
    <interactant intactId="EBI-10181188">
        <id>Q8N7W2-2</id>
    </interactant>
    <interactant intactId="EBI-607755">
        <id>Q9BZL1</id>
        <label>UBL5</label>
    </interactant>
    <organismsDiffer>false</organismsDiffer>
    <experiments>3</experiments>
</comment>
<comment type="interaction">
    <interactant intactId="EBI-10181188">
        <id>Q8N7W2-2</id>
    </interactant>
    <interactant intactId="EBI-2511991">
        <id>Q9Y2K6</id>
        <label>USP20</label>
    </interactant>
    <organismsDiffer>false</organismsDiffer>
    <experiments>8</experiments>
</comment>
<comment type="interaction">
    <interactant intactId="EBI-10181188">
        <id>Q8N7W2-2</id>
    </interactant>
    <interactant intactId="EBI-11983741">
        <id>Q3SXR9</id>
        <label>VCX2</label>
    </interactant>
    <organismsDiffer>false</organismsDiffer>
    <experiments>5</experiments>
</comment>
<comment type="interaction">
    <interactant intactId="EBI-10181188">
        <id>Q8N7W2-2</id>
    </interactant>
    <interactant intactId="EBI-310886">
        <id>Q9P202</id>
        <label>WHRN</label>
    </interactant>
    <organismsDiffer>false</organismsDiffer>
    <experiments>3</experiments>
</comment>
<comment type="interaction">
    <interactant intactId="EBI-10181188">
        <id>Q8N7W2-2</id>
    </interactant>
    <interactant intactId="EBI-597063">
        <id>Q8TBK6</id>
        <label>ZCCHC10</label>
    </interactant>
    <organismsDiffer>false</organismsDiffer>
    <experiments>3</experiments>
</comment>
<comment type="interaction">
    <interactant intactId="EBI-10181188">
        <id>Q8N7W2-2</id>
    </interactant>
    <interactant intactId="EBI-2687480">
        <id>Q969S3</id>
        <label>ZNF622</label>
    </interactant>
    <organismsDiffer>false</organismsDiffer>
    <experiments>3</experiments>
</comment>
<comment type="alternative products">
    <event type="alternative splicing"/>
    <isoform>
        <id>Q8N7W2-4</id>
        <name>1</name>
        <sequence type="displayed"/>
    </isoform>
    <isoform>
        <id>Q8N7W2-2</id>
        <name>2</name>
        <sequence type="described" ref="VSP_062282 VSP_062283"/>
    </isoform>
    <isoform>
        <id>Q8N7W2-3</id>
        <name>3</name>
        <sequence type="described" ref="VSP_062282 VSP_062284 VSP_062285"/>
    </isoform>
</comment>
<comment type="sequence caution" evidence="4">
    <conflict type="erroneous initiation">
        <sequence resource="EMBL-CDS" id="AAH31618"/>
    </conflict>
    <text>Truncated N-terminus.</text>
</comment>
<feature type="chain" id="PRO_0000244080" description="BEN domain-containing protein 7">
    <location>
        <begin position="1"/>
        <end position="413"/>
    </location>
</feature>
<feature type="domain" description="BEN" evidence="1">
    <location>
        <begin position="287"/>
        <end position="392"/>
    </location>
</feature>
<feature type="region of interest" description="Disordered" evidence="2">
    <location>
        <begin position="78"/>
        <end position="153"/>
    </location>
</feature>
<feature type="region of interest" description="Disordered" evidence="2">
    <location>
        <begin position="208"/>
        <end position="243"/>
    </location>
</feature>
<feature type="compositionally biased region" description="Basic and acidic residues" evidence="2">
    <location>
        <begin position="78"/>
        <end position="88"/>
    </location>
</feature>
<feature type="compositionally biased region" description="Polar residues" evidence="2">
    <location>
        <begin position="99"/>
        <end position="111"/>
    </location>
</feature>
<feature type="compositionally biased region" description="Polar residues" evidence="2">
    <location>
        <begin position="121"/>
        <end position="153"/>
    </location>
</feature>
<feature type="compositionally biased region" description="Basic residues" evidence="2">
    <location>
        <begin position="211"/>
        <end position="222"/>
    </location>
</feature>
<feature type="compositionally biased region" description="Low complexity" evidence="2">
    <location>
        <begin position="223"/>
        <end position="232"/>
    </location>
</feature>
<feature type="modified residue" description="Phosphothreonine" evidence="5">
    <location>
        <position position="324"/>
    </location>
</feature>
<feature type="modified residue" description="Phosphoserine" evidence="5">
    <location>
        <position position="328"/>
    </location>
</feature>
<feature type="cross-link" description="Glycyl lysine isopeptide (Lys-Gly) (interchain with G-Cter in SUMO2)" evidence="6">
    <location>
        <position position="16"/>
    </location>
</feature>
<feature type="cross-link" description="Glycyl lysine isopeptide (Lys-Gly) (interchain with G-Cter in SUMO2)" evidence="6">
    <location>
        <position position="56"/>
    </location>
</feature>
<feature type="cross-link" description="Glycyl lysine isopeptide (Lys-Gly) (interchain with G-Cter in SUMO2)" evidence="6">
    <location>
        <position position="85"/>
    </location>
</feature>
<feature type="cross-link" description="Glycyl lysine isopeptide (Lys-Gly) (interchain with G-Cter in SUMO2)" evidence="6">
    <location>
        <position position="243"/>
    </location>
</feature>
<feature type="splice variant" id="VSP_062282" description="In isoform 2 and isoform 3.">
    <location>
        <begin position="1"/>
        <end position="52"/>
    </location>
</feature>
<feature type="splice variant" id="VSP_062283" description="In isoform 2.">
    <original>N</original>
    <variation>NGMVVNKHSEGSHG</variation>
    <location>
        <position position="149"/>
    </location>
</feature>
<feature type="splice variant" id="VSP_062284" description="In isoform 3.">
    <original>S</original>
    <variation>SA</variation>
    <location>
        <position position="394"/>
    </location>
</feature>
<feature type="splice variant" id="VSP_062285" description="In isoform 3.">
    <original>VV</original>
    <variation>GACGGPCTVLPGGSAAVTLVLQSSPQTMSQEKGQMAEPWEEQHLVLLNNLTRDRAETGALSQTSQDFKHHSFLITQVSATLHHQRGIRNFPAPGSAKSLTLHISCLSL</variation>
    <location>
        <begin position="412"/>
        <end position="413"/>
    </location>
</feature>
<feature type="sequence variant" id="VAR_035501" description="In a breast cancer sample; somatic mutation." evidence="3">
    <original>R</original>
    <variation>T</variation>
    <location>
        <position position="313"/>
    </location>
</feature>
<feature type="sequence variant" id="VAR_057830" description="In dbSNP:rs12247033.">
    <original>N</original>
    <variation>S</variation>
    <location>
        <position position="341"/>
    </location>
</feature>
<proteinExistence type="evidence at protein level"/>
<evidence type="ECO:0000255" key="1">
    <source>
        <dbReference type="PROSITE-ProRule" id="PRU00784"/>
    </source>
</evidence>
<evidence type="ECO:0000256" key="2">
    <source>
        <dbReference type="SAM" id="MobiDB-lite"/>
    </source>
</evidence>
<evidence type="ECO:0000269" key="3">
    <source>
    </source>
</evidence>
<evidence type="ECO:0000305" key="4"/>
<evidence type="ECO:0007744" key="5">
    <source>
    </source>
</evidence>
<evidence type="ECO:0007744" key="6">
    <source>
    </source>
</evidence>
<sequence length="413" mass="46204">MEFSERKRSRKSQSFKLVSRDYHHEVYKIPEFSNDVNGEAKETQPIFLGDESMEIKKQITGMRRLLNDSTGRIYQRVGKEGEKLKEEPQDLDLVWPPRLNSSAEAPQSLHPSSRGVWNELPPQSGQFSGQYGTRSRTFQSQPHPTTSSNGELPVVNSSAGSNCCTCNCQSTLQAILQELKTMRKLMQIQAVGTQNRQQPPISLICSQRTAVSRKRNKKKKVPPKTVEPLTVKQKPSGSEMEKKSVVASELSALQAAEHTSPEESRVLGFGIVLESPSSDPEVQLAEGFDVFMPKSQLDSILSNYTRSGSLLFRKLVCAFFDDKTLANSLPNGKRKRGLNDNRKGLDQNIVGAIKVFTEKYCTANHVDKLPGPRDWVQILQDQIKLARRRLKRGSEIADSDERLDGIALPPTVV</sequence>
<organism>
    <name type="scientific">Homo sapiens</name>
    <name type="common">Human</name>
    <dbReference type="NCBI Taxonomy" id="9606"/>
    <lineage>
        <taxon>Eukaryota</taxon>
        <taxon>Metazoa</taxon>
        <taxon>Chordata</taxon>
        <taxon>Craniata</taxon>
        <taxon>Vertebrata</taxon>
        <taxon>Euteleostomi</taxon>
        <taxon>Mammalia</taxon>
        <taxon>Eutheria</taxon>
        <taxon>Euarchontoglires</taxon>
        <taxon>Primates</taxon>
        <taxon>Haplorrhini</taxon>
        <taxon>Catarrhini</taxon>
        <taxon>Hominidae</taxon>
        <taxon>Homo</taxon>
    </lineage>
</organism>
<name>BEND7_HUMAN</name>
<gene>
    <name type="primary">BEND7</name>
    <name type="synonym">C10orf30</name>
</gene>
<keyword id="KW-0025">Alternative splicing</keyword>
<keyword id="KW-1017">Isopeptide bond</keyword>
<keyword id="KW-0597">Phosphoprotein</keyword>
<keyword id="KW-1267">Proteomics identification</keyword>
<keyword id="KW-1185">Reference proteome</keyword>
<keyword id="KW-0832">Ubl conjugation</keyword>
<reference key="1">
    <citation type="journal article" date="2004" name="Nat. Genet.">
        <title>Complete sequencing and characterization of 21,243 full-length human cDNAs.</title>
        <authorList>
            <person name="Ota T."/>
            <person name="Suzuki Y."/>
            <person name="Nishikawa T."/>
            <person name="Otsuki T."/>
            <person name="Sugiyama T."/>
            <person name="Irie R."/>
            <person name="Wakamatsu A."/>
            <person name="Hayashi K."/>
            <person name="Sato H."/>
            <person name="Nagai K."/>
            <person name="Kimura K."/>
            <person name="Makita H."/>
            <person name="Sekine M."/>
            <person name="Obayashi M."/>
            <person name="Nishi T."/>
            <person name="Shibahara T."/>
            <person name="Tanaka T."/>
            <person name="Ishii S."/>
            <person name="Yamamoto J."/>
            <person name="Saito K."/>
            <person name="Kawai Y."/>
            <person name="Isono Y."/>
            <person name="Nakamura Y."/>
            <person name="Nagahari K."/>
            <person name="Murakami K."/>
            <person name="Yasuda T."/>
            <person name="Iwayanagi T."/>
            <person name="Wagatsuma M."/>
            <person name="Shiratori A."/>
            <person name="Sudo H."/>
            <person name="Hosoiri T."/>
            <person name="Kaku Y."/>
            <person name="Kodaira H."/>
            <person name="Kondo H."/>
            <person name="Sugawara M."/>
            <person name="Takahashi M."/>
            <person name="Kanda K."/>
            <person name="Yokoi T."/>
            <person name="Furuya T."/>
            <person name="Kikkawa E."/>
            <person name="Omura Y."/>
            <person name="Abe K."/>
            <person name="Kamihara K."/>
            <person name="Katsuta N."/>
            <person name="Sato K."/>
            <person name="Tanikawa M."/>
            <person name="Yamazaki M."/>
            <person name="Ninomiya K."/>
            <person name="Ishibashi T."/>
            <person name="Yamashita H."/>
            <person name="Murakawa K."/>
            <person name="Fujimori K."/>
            <person name="Tanai H."/>
            <person name="Kimata M."/>
            <person name="Watanabe M."/>
            <person name="Hiraoka S."/>
            <person name="Chiba Y."/>
            <person name="Ishida S."/>
            <person name="Ono Y."/>
            <person name="Takiguchi S."/>
            <person name="Watanabe S."/>
            <person name="Yosida M."/>
            <person name="Hotuta T."/>
            <person name="Kusano J."/>
            <person name="Kanehori K."/>
            <person name="Takahashi-Fujii A."/>
            <person name="Hara H."/>
            <person name="Tanase T.-O."/>
            <person name="Nomura Y."/>
            <person name="Togiya S."/>
            <person name="Komai F."/>
            <person name="Hara R."/>
            <person name="Takeuchi K."/>
            <person name="Arita M."/>
            <person name="Imose N."/>
            <person name="Musashino K."/>
            <person name="Yuuki H."/>
            <person name="Oshima A."/>
            <person name="Sasaki N."/>
            <person name="Aotsuka S."/>
            <person name="Yoshikawa Y."/>
            <person name="Matsunawa H."/>
            <person name="Ichihara T."/>
            <person name="Shiohata N."/>
            <person name="Sano S."/>
            <person name="Moriya S."/>
            <person name="Momiyama H."/>
            <person name="Satoh N."/>
            <person name="Takami S."/>
            <person name="Terashima Y."/>
            <person name="Suzuki O."/>
            <person name="Nakagawa S."/>
            <person name="Senoh A."/>
            <person name="Mizoguchi H."/>
            <person name="Goto Y."/>
            <person name="Shimizu F."/>
            <person name="Wakebe H."/>
            <person name="Hishigaki H."/>
            <person name="Watanabe T."/>
            <person name="Sugiyama A."/>
            <person name="Takemoto M."/>
            <person name="Kawakami B."/>
            <person name="Yamazaki M."/>
            <person name="Watanabe K."/>
            <person name="Kumagai A."/>
            <person name="Itakura S."/>
            <person name="Fukuzumi Y."/>
            <person name="Fujimori Y."/>
            <person name="Komiyama M."/>
            <person name="Tashiro H."/>
            <person name="Tanigami A."/>
            <person name="Fujiwara T."/>
            <person name="Ono T."/>
            <person name="Yamada K."/>
            <person name="Fujii Y."/>
            <person name="Ozaki K."/>
            <person name="Hirao M."/>
            <person name="Ohmori Y."/>
            <person name="Kawabata A."/>
            <person name="Hikiji T."/>
            <person name="Kobatake N."/>
            <person name="Inagaki H."/>
            <person name="Ikema Y."/>
            <person name="Okamoto S."/>
            <person name="Okitani R."/>
            <person name="Kawakami T."/>
            <person name="Noguchi S."/>
            <person name="Itoh T."/>
            <person name="Shigeta K."/>
            <person name="Senba T."/>
            <person name="Matsumura K."/>
            <person name="Nakajima Y."/>
            <person name="Mizuno T."/>
            <person name="Morinaga M."/>
            <person name="Sasaki M."/>
            <person name="Togashi T."/>
            <person name="Oyama M."/>
            <person name="Hata H."/>
            <person name="Watanabe M."/>
            <person name="Komatsu T."/>
            <person name="Mizushima-Sugano J."/>
            <person name="Satoh T."/>
            <person name="Shirai Y."/>
            <person name="Takahashi Y."/>
            <person name="Nakagawa K."/>
            <person name="Okumura K."/>
            <person name="Nagase T."/>
            <person name="Nomura N."/>
            <person name="Kikuchi H."/>
            <person name="Masuho Y."/>
            <person name="Yamashita R."/>
            <person name="Nakai K."/>
            <person name="Yada T."/>
            <person name="Nakamura Y."/>
            <person name="Ohara O."/>
            <person name="Isogai T."/>
            <person name="Sugano S."/>
        </authorList>
    </citation>
    <scope>NUCLEOTIDE SEQUENCE [LARGE SCALE MRNA] (ISOFORM 3)</scope>
</reference>
<reference key="2">
    <citation type="journal article" date="2004" name="Nature">
        <title>The DNA sequence and comparative analysis of human chromosome 10.</title>
        <authorList>
            <person name="Deloukas P."/>
            <person name="Earthrowl M.E."/>
            <person name="Grafham D.V."/>
            <person name="Rubenfield M."/>
            <person name="French L."/>
            <person name="Steward C.A."/>
            <person name="Sims S.K."/>
            <person name="Jones M.C."/>
            <person name="Searle S."/>
            <person name="Scott C."/>
            <person name="Howe K."/>
            <person name="Hunt S.E."/>
            <person name="Andrews T.D."/>
            <person name="Gilbert J.G.R."/>
            <person name="Swarbreck D."/>
            <person name="Ashurst J.L."/>
            <person name="Taylor A."/>
            <person name="Battles J."/>
            <person name="Bird C.P."/>
            <person name="Ainscough R."/>
            <person name="Almeida J.P."/>
            <person name="Ashwell R.I.S."/>
            <person name="Ambrose K.D."/>
            <person name="Babbage A.K."/>
            <person name="Bagguley C.L."/>
            <person name="Bailey J."/>
            <person name="Banerjee R."/>
            <person name="Bates K."/>
            <person name="Beasley H."/>
            <person name="Bray-Allen S."/>
            <person name="Brown A.J."/>
            <person name="Brown J.Y."/>
            <person name="Burford D.C."/>
            <person name="Burrill W."/>
            <person name="Burton J."/>
            <person name="Cahill P."/>
            <person name="Camire D."/>
            <person name="Carter N.P."/>
            <person name="Chapman J.C."/>
            <person name="Clark S.Y."/>
            <person name="Clarke G."/>
            <person name="Clee C.M."/>
            <person name="Clegg S."/>
            <person name="Corby N."/>
            <person name="Coulson A."/>
            <person name="Dhami P."/>
            <person name="Dutta I."/>
            <person name="Dunn M."/>
            <person name="Faulkner L."/>
            <person name="Frankish A."/>
            <person name="Frankland J.A."/>
            <person name="Garner P."/>
            <person name="Garnett J."/>
            <person name="Gribble S."/>
            <person name="Griffiths C."/>
            <person name="Grocock R."/>
            <person name="Gustafson E."/>
            <person name="Hammond S."/>
            <person name="Harley J.L."/>
            <person name="Hart E."/>
            <person name="Heath P.D."/>
            <person name="Ho T.P."/>
            <person name="Hopkins B."/>
            <person name="Horne J."/>
            <person name="Howden P.J."/>
            <person name="Huckle E."/>
            <person name="Hynds C."/>
            <person name="Johnson C."/>
            <person name="Johnson D."/>
            <person name="Kana A."/>
            <person name="Kay M."/>
            <person name="Kimberley A.M."/>
            <person name="Kershaw J.K."/>
            <person name="Kokkinaki M."/>
            <person name="Laird G.K."/>
            <person name="Lawlor S."/>
            <person name="Lee H.M."/>
            <person name="Leongamornlert D.A."/>
            <person name="Laird G."/>
            <person name="Lloyd C."/>
            <person name="Lloyd D.M."/>
            <person name="Loveland J."/>
            <person name="Lovell J."/>
            <person name="McLaren S."/>
            <person name="McLay K.E."/>
            <person name="McMurray A."/>
            <person name="Mashreghi-Mohammadi M."/>
            <person name="Matthews L."/>
            <person name="Milne S."/>
            <person name="Nickerson T."/>
            <person name="Nguyen M."/>
            <person name="Overton-Larty E."/>
            <person name="Palmer S.A."/>
            <person name="Pearce A.V."/>
            <person name="Peck A.I."/>
            <person name="Pelan S."/>
            <person name="Phillimore B."/>
            <person name="Porter K."/>
            <person name="Rice C.M."/>
            <person name="Rogosin A."/>
            <person name="Ross M.T."/>
            <person name="Sarafidou T."/>
            <person name="Sehra H.K."/>
            <person name="Shownkeen R."/>
            <person name="Skuce C.D."/>
            <person name="Smith M."/>
            <person name="Standring L."/>
            <person name="Sycamore N."/>
            <person name="Tester J."/>
            <person name="Thorpe A."/>
            <person name="Torcasso W."/>
            <person name="Tracey A."/>
            <person name="Tromans A."/>
            <person name="Tsolas J."/>
            <person name="Wall M."/>
            <person name="Walsh J."/>
            <person name="Wang H."/>
            <person name="Weinstock K."/>
            <person name="West A.P."/>
            <person name="Willey D.L."/>
            <person name="Whitehead S.L."/>
            <person name="Wilming L."/>
            <person name="Wray P.W."/>
            <person name="Young L."/>
            <person name="Chen Y."/>
            <person name="Lovering R.C."/>
            <person name="Moschonas N.K."/>
            <person name="Siebert R."/>
            <person name="Fechtel K."/>
            <person name="Bentley D."/>
            <person name="Durbin R.M."/>
            <person name="Hubbard T."/>
            <person name="Doucette-Stamm L."/>
            <person name="Beck S."/>
            <person name="Smith D.R."/>
            <person name="Rogers J."/>
        </authorList>
    </citation>
    <scope>NUCLEOTIDE SEQUENCE [LARGE SCALE GENOMIC DNA]</scope>
</reference>
<reference key="3">
    <citation type="journal article" date="2004" name="Genome Res.">
        <title>The status, quality, and expansion of the NIH full-length cDNA project: the Mammalian Gene Collection (MGC).</title>
        <authorList>
            <consortium name="The MGC Project Team"/>
        </authorList>
    </citation>
    <scope>NUCLEOTIDE SEQUENCE [LARGE SCALE MRNA] (ISOFORM 2)</scope>
    <source>
        <tissue>Brain</tissue>
    </source>
</reference>
<reference key="4">
    <citation type="journal article" date="2008" name="Proc. Natl. Acad. Sci. U.S.A.">
        <title>A quantitative atlas of mitotic phosphorylation.</title>
        <authorList>
            <person name="Dephoure N."/>
            <person name="Zhou C."/>
            <person name="Villen J."/>
            <person name="Beausoleil S.A."/>
            <person name="Bakalarski C.E."/>
            <person name="Elledge S.J."/>
            <person name="Gygi S.P."/>
        </authorList>
    </citation>
    <scope>IDENTIFICATION BY MASS SPECTROMETRY [LARGE SCALE ANALYSIS]</scope>
    <source>
        <tissue>Cervix carcinoma</tissue>
    </source>
</reference>
<reference key="5">
    <citation type="journal article" date="2010" name="Sci. Signal.">
        <title>Quantitative phosphoproteomics reveals widespread full phosphorylation site occupancy during mitosis.</title>
        <authorList>
            <person name="Olsen J.V."/>
            <person name="Vermeulen M."/>
            <person name="Santamaria A."/>
            <person name="Kumar C."/>
            <person name="Miller M.L."/>
            <person name="Jensen L.J."/>
            <person name="Gnad F."/>
            <person name="Cox J."/>
            <person name="Jensen T.S."/>
            <person name="Nigg E.A."/>
            <person name="Brunak S."/>
            <person name="Mann M."/>
        </authorList>
    </citation>
    <scope>PHOSPHORYLATION [LARGE SCALE ANALYSIS] AT THR-324 AND SER-328</scope>
    <scope>IDENTIFICATION BY MASS SPECTROMETRY [LARGE SCALE ANALYSIS]</scope>
    <source>
        <tissue>Cervix carcinoma</tissue>
    </source>
</reference>
<reference key="6">
    <citation type="journal article" date="2017" name="Nat. Struct. Mol. Biol.">
        <title>Site-specific mapping of the human SUMO proteome reveals co-modification with phosphorylation.</title>
        <authorList>
            <person name="Hendriks I.A."/>
            <person name="Lyon D."/>
            <person name="Young C."/>
            <person name="Jensen L.J."/>
            <person name="Vertegaal A.C."/>
            <person name="Nielsen M.L."/>
        </authorList>
    </citation>
    <scope>SUMOYLATION [LARGE SCALE ANALYSIS] AT LYS-16; LYS-56; LYS-85 AND LYS-243</scope>
    <scope>IDENTIFICATION BY MASS SPECTROMETRY [LARGE SCALE ANALYSIS]</scope>
</reference>
<reference key="7">
    <citation type="journal article" date="2006" name="Science">
        <title>The consensus coding sequences of human breast and colorectal cancers.</title>
        <authorList>
            <person name="Sjoeblom T."/>
            <person name="Jones S."/>
            <person name="Wood L.D."/>
            <person name="Parsons D.W."/>
            <person name="Lin J."/>
            <person name="Barber T.D."/>
            <person name="Mandelker D."/>
            <person name="Leary R.J."/>
            <person name="Ptak J."/>
            <person name="Silliman N."/>
            <person name="Szabo S."/>
            <person name="Buckhaults P."/>
            <person name="Farrell C."/>
            <person name="Meeh P."/>
            <person name="Markowitz S.D."/>
            <person name="Willis J."/>
            <person name="Dawson D."/>
            <person name="Willson J.K.V."/>
            <person name="Gazdar A.F."/>
            <person name="Hartigan J."/>
            <person name="Wu L."/>
            <person name="Liu C."/>
            <person name="Parmigiani G."/>
            <person name="Park B.H."/>
            <person name="Bachman K.E."/>
            <person name="Papadopoulos N."/>
            <person name="Vogelstein B."/>
            <person name="Kinzler K.W."/>
            <person name="Velculescu V.E."/>
        </authorList>
    </citation>
    <scope>VARIANT [LARGE SCALE ANALYSIS] THR-313</scope>
</reference>
<dbReference type="EMBL" id="AK097602">
    <property type="protein sequence ID" value="BAC05114.1"/>
    <property type="molecule type" value="mRNA"/>
</dbReference>
<dbReference type="EMBL" id="AL359172">
    <property type="status" value="NOT_ANNOTATED_CDS"/>
    <property type="molecule type" value="Genomic_DNA"/>
</dbReference>
<dbReference type="EMBL" id="AL590677">
    <property type="status" value="NOT_ANNOTATED_CDS"/>
    <property type="molecule type" value="Genomic_DNA"/>
</dbReference>
<dbReference type="EMBL" id="BC031618">
    <property type="protein sequence ID" value="AAH31618.1"/>
    <property type="status" value="ALT_INIT"/>
    <property type="molecule type" value="mRNA"/>
</dbReference>
<dbReference type="EMBL" id="CD300572">
    <property type="status" value="NOT_ANNOTATED_CDS"/>
    <property type="molecule type" value="mRNA"/>
</dbReference>
<dbReference type="CCDS" id="CCDS41490.1">
    <molecule id="Q8N7W2-2"/>
</dbReference>
<dbReference type="CCDS" id="CCDS7099.1">
    <molecule id="Q8N7W2-3"/>
</dbReference>
<dbReference type="CCDS" id="CCDS91214.1">
    <molecule id="Q8N7W2-4"/>
</dbReference>
<dbReference type="RefSeq" id="NP_001094382.1">
    <molecule id="Q8N7W2-2"/>
    <property type="nucleotide sequence ID" value="NM_001100912.2"/>
</dbReference>
<dbReference type="RefSeq" id="NP_001356792.1">
    <molecule id="Q8N7W2-4"/>
    <property type="nucleotide sequence ID" value="NM_001369863.1"/>
</dbReference>
<dbReference type="RefSeq" id="NP_689964.2">
    <property type="nucleotide sequence ID" value="NM_152751.2"/>
</dbReference>
<dbReference type="RefSeq" id="XP_011517713.1">
    <property type="nucleotide sequence ID" value="XM_011519411.2"/>
</dbReference>
<dbReference type="SMR" id="Q8N7W2"/>
<dbReference type="BioGRID" id="128797">
    <property type="interactions" value="116"/>
</dbReference>
<dbReference type="FunCoup" id="Q8N7W2">
    <property type="interactions" value="248"/>
</dbReference>
<dbReference type="IntAct" id="Q8N7W2">
    <property type="interactions" value="96"/>
</dbReference>
<dbReference type="MINT" id="Q8N7W2"/>
<dbReference type="STRING" id="9606.ENSP00000345773"/>
<dbReference type="GlyGen" id="Q8N7W2">
    <property type="glycosylation" value="1 site"/>
</dbReference>
<dbReference type="iPTMnet" id="Q8N7W2"/>
<dbReference type="PhosphoSitePlus" id="Q8N7W2"/>
<dbReference type="BioMuta" id="BEND7"/>
<dbReference type="DMDM" id="109820782"/>
<dbReference type="jPOST" id="Q8N7W2"/>
<dbReference type="MassIVE" id="Q8N7W2"/>
<dbReference type="PaxDb" id="9606-ENSP00000345773"/>
<dbReference type="PeptideAtlas" id="Q8N7W2"/>
<dbReference type="ProteomicsDB" id="72336">
    <molecule id="Q8N7W2-2"/>
</dbReference>
<dbReference type="ProteomicsDB" id="72337">
    <molecule id="Q8N7W2-3"/>
</dbReference>
<dbReference type="Antibodypedia" id="44073">
    <property type="antibodies" value="122 antibodies from 18 providers"/>
</dbReference>
<dbReference type="DNASU" id="222389"/>
<dbReference type="Ensembl" id="ENST00000378605.3">
    <molecule id="Q8N7W2-2"/>
    <property type="protein sequence ID" value="ENSP00000367868.3"/>
    <property type="gene ID" value="ENSG00000165626.19"/>
</dbReference>
<dbReference type="Ensembl" id="ENST00000466271.3">
    <molecule id="Q8N7W2-4"/>
    <property type="protein sequence ID" value="ENSP00000507500.2"/>
    <property type="gene ID" value="ENSG00000165626.19"/>
</dbReference>
<dbReference type="GeneID" id="222389"/>
<dbReference type="KEGG" id="hsa:222389"/>
<dbReference type="MANE-Select" id="ENST00000466271.3">
    <property type="protein sequence ID" value="ENSP00000507500.2"/>
    <property type="RefSeq nucleotide sequence ID" value="NM_001369863.1"/>
    <property type="RefSeq protein sequence ID" value="NP_001356792.1"/>
</dbReference>
<dbReference type="UCSC" id="uc001imm.3">
    <molecule id="Q8N7W2-4"/>
    <property type="organism name" value="human"/>
</dbReference>
<dbReference type="AGR" id="HGNC:23514"/>
<dbReference type="CTD" id="222389"/>
<dbReference type="DisGeNET" id="222389"/>
<dbReference type="GeneCards" id="BEND7"/>
<dbReference type="HGNC" id="HGNC:23514">
    <property type="gene designation" value="BEND7"/>
</dbReference>
<dbReference type="HPA" id="ENSG00000165626">
    <property type="expression patterns" value="Low tissue specificity"/>
</dbReference>
<dbReference type="neXtProt" id="NX_Q8N7W2"/>
<dbReference type="OpenTargets" id="ENSG00000165626"/>
<dbReference type="PharmGKB" id="PA164716578"/>
<dbReference type="VEuPathDB" id="HostDB:ENSG00000165626"/>
<dbReference type="eggNOG" id="ENOG502QQVD">
    <property type="taxonomic scope" value="Eukaryota"/>
</dbReference>
<dbReference type="GeneTree" id="ENSGT00940000163804"/>
<dbReference type="HOGENOM" id="CLU_043816_1_0_1"/>
<dbReference type="InParanoid" id="Q8N7W2"/>
<dbReference type="OrthoDB" id="9944532at2759"/>
<dbReference type="PAN-GO" id="Q8N7W2">
    <property type="GO annotations" value="0 GO annotations based on evolutionary models"/>
</dbReference>
<dbReference type="PhylomeDB" id="Q8N7W2"/>
<dbReference type="TreeFam" id="TF332993"/>
<dbReference type="PathwayCommons" id="Q8N7W2"/>
<dbReference type="SignaLink" id="Q8N7W2"/>
<dbReference type="BioGRID-ORCS" id="222389">
    <property type="hits" value="14 hits in 1150 CRISPR screens"/>
</dbReference>
<dbReference type="ChiTaRS" id="BEND7">
    <property type="organism name" value="human"/>
</dbReference>
<dbReference type="GenomeRNAi" id="222389"/>
<dbReference type="Pharos" id="Q8N7W2">
    <property type="development level" value="Tdark"/>
</dbReference>
<dbReference type="PRO" id="PR:Q8N7W2"/>
<dbReference type="Proteomes" id="UP000005640">
    <property type="component" value="Chromosome 10"/>
</dbReference>
<dbReference type="RNAct" id="Q8N7W2">
    <property type="molecule type" value="protein"/>
</dbReference>
<dbReference type="Bgee" id="ENSG00000165626">
    <property type="expression patterns" value="Expressed in kidney epithelium and 173 other cell types or tissues"/>
</dbReference>
<dbReference type="ExpressionAtlas" id="Q8N7W2">
    <property type="expression patterns" value="baseline and differential"/>
</dbReference>
<dbReference type="GO" id="GO:0070062">
    <property type="term" value="C:extracellular exosome"/>
    <property type="evidence" value="ECO:0007005"/>
    <property type="project" value="UniProtKB"/>
</dbReference>
<dbReference type="GO" id="GO:0003677">
    <property type="term" value="F:DNA binding"/>
    <property type="evidence" value="ECO:0007669"/>
    <property type="project" value="InterPro"/>
</dbReference>
<dbReference type="Gene3D" id="1.10.10.2590">
    <property type="entry name" value="BEN domain"/>
    <property type="match status" value="1"/>
</dbReference>
<dbReference type="InterPro" id="IPR018379">
    <property type="entry name" value="BEN_domain"/>
</dbReference>
<dbReference type="InterPro" id="IPR053072">
    <property type="entry name" value="BEN_domain_protein_7"/>
</dbReference>
<dbReference type="PANTHER" id="PTHR35068">
    <property type="entry name" value="BEN DOMAIN-CONTAINING PROTEIN 7"/>
    <property type="match status" value="1"/>
</dbReference>
<dbReference type="PANTHER" id="PTHR35068:SF1">
    <property type="entry name" value="BEN DOMAIN-CONTAINING PROTEIN 7"/>
    <property type="match status" value="1"/>
</dbReference>
<dbReference type="Pfam" id="PF10523">
    <property type="entry name" value="BEN"/>
    <property type="match status" value="1"/>
</dbReference>
<dbReference type="SMART" id="SM01025">
    <property type="entry name" value="BEN"/>
    <property type="match status" value="1"/>
</dbReference>
<dbReference type="PROSITE" id="PS51457">
    <property type="entry name" value="BEN"/>
    <property type="match status" value="1"/>
</dbReference>
<protein>
    <recommendedName>
        <fullName>BEN domain-containing protein 7</fullName>
    </recommendedName>
</protein>
<accession>Q8N7W2</accession>
<accession>A0A804HJG9</accession>
<accession>Q5SYY7</accession>
<accession>Q5SYY8</accession>
<accession>Q5SYY9</accession>
<accession>Q8N5T7</accession>